<comment type="function">
    <text>Involved in genotype-specific nodulation of soybeans.</text>
</comment>
<accession>P50329</accession>
<evidence type="ECO:0000255" key="1">
    <source>
        <dbReference type="PROSITE-ProRule" id="PRU00254"/>
    </source>
</evidence>
<name>NOLA_BRAEL</name>
<feature type="chain" id="PRO_0000098146" description="Nodulation protein NolA">
    <location>
        <begin position="1"/>
        <end position="219" status="greater than"/>
    </location>
</feature>
<feature type="domain" description="HTH merR-type" evidence="1">
    <location>
        <begin position="10"/>
        <end position="79"/>
    </location>
</feature>
<feature type="DNA-binding region" description="H-T-H motif" evidence="1">
    <location>
        <begin position="13"/>
        <end position="32"/>
    </location>
</feature>
<feature type="non-terminal residue">
    <location>
        <position position="219"/>
    </location>
</feature>
<proteinExistence type="predicted"/>
<dbReference type="EMBL" id="U04609">
    <property type="protein sequence ID" value="AAA63596.1"/>
    <property type="molecule type" value="Genomic_DNA"/>
</dbReference>
<dbReference type="SMR" id="P50329"/>
<dbReference type="GO" id="GO:0003677">
    <property type="term" value="F:DNA binding"/>
    <property type="evidence" value="ECO:0007669"/>
    <property type="project" value="UniProtKB-KW"/>
</dbReference>
<dbReference type="GO" id="GO:0003700">
    <property type="term" value="F:DNA-binding transcription factor activity"/>
    <property type="evidence" value="ECO:0007669"/>
    <property type="project" value="InterPro"/>
</dbReference>
<dbReference type="GO" id="GO:0009399">
    <property type="term" value="P:nitrogen fixation"/>
    <property type="evidence" value="ECO:0007669"/>
    <property type="project" value="UniProtKB-KW"/>
</dbReference>
<dbReference type="CDD" id="cd04788">
    <property type="entry name" value="HTH_NolA-AlbR"/>
    <property type="match status" value="1"/>
</dbReference>
<dbReference type="Gene3D" id="1.10.1660.10">
    <property type="match status" value="1"/>
</dbReference>
<dbReference type="InterPro" id="IPR009061">
    <property type="entry name" value="DNA-bd_dom_put_sf"/>
</dbReference>
<dbReference type="InterPro" id="IPR000551">
    <property type="entry name" value="MerR-type_HTH_dom"/>
</dbReference>
<dbReference type="InterPro" id="IPR047057">
    <property type="entry name" value="MerR_fam"/>
</dbReference>
<dbReference type="PANTHER" id="PTHR30204:SF90">
    <property type="entry name" value="HTH-TYPE TRANSCRIPTIONAL ACTIVATOR MTA"/>
    <property type="match status" value="1"/>
</dbReference>
<dbReference type="PANTHER" id="PTHR30204">
    <property type="entry name" value="REDOX-CYCLING DRUG-SENSING TRANSCRIPTIONAL ACTIVATOR SOXR"/>
    <property type="match status" value="1"/>
</dbReference>
<dbReference type="Pfam" id="PF13411">
    <property type="entry name" value="MerR_1"/>
    <property type="match status" value="1"/>
</dbReference>
<dbReference type="PRINTS" id="PR00040">
    <property type="entry name" value="HTHMERR"/>
</dbReference>
<dbReference type="SMART" id="SM00422">
    <property type="entry name" value="HTH_MERR"/>
    <property type="match status" value="1"/>
</dbReference>
<dbReference type="SUPFAM" id="SSF46955">
    <property type="entry name" value="Putative DNA-binding domain"/>
    <property type="match status" value="1"/>
</dbReference>
<dbReference type="PROSITE" id="PS00552">
    <property type="entry name" value="HTH_MERR_1"/>
    <property type="match status" value="1"/>
</dbReference>
<dbReference type="PROSITE" id="PS50937">
    <property type="entry name" value="HTH_MERR_2"/>
    <property type="match status" value="1"/>
</dbReference>
<reference key="1">
    <citation type="journal article" date="1994" name="Mol. Plant Microbe Interact.">
        <title>DNA sequence of the common nodulation genes of Bradyrhizobium elkanii and their phylogenetic relationship to those of other nodulating bacteria.</title>
        <authorList>
            <person name="Dobert R.C."/>
            <person name="Breil B.T."/>
            <person name="Triplett E.W."/>
        </authorList>
    </citation>
    <scope>NUCLEOTIDE SEQUENCE [GENOMIC DNA]</scope>
    <source>
        <strain>USDA 94</strain>
    </source>
</reference>
<protein>
    <recommendedName>
        <fullName>Nodulation protein NolA</fullName>
    </recommendedName>
</protein>
<keyword id="KW-0238">DNA-binding</keyword>
<keyword id="KW-0535">Nitrogen fixation</keyword>
<keyword id="KW-0536">Nodulation</keyword>
<gene>
    <name type="primary">nolA</name>
</gene>
<sequence length="219" mass="24923">MSKATPRRRRWRIGELAEATGVTVRTLHHYEHTGLLAASERTDGGHRMYDRESVQRVHQIRALRELGFSLHEIRKAMEGTTSLIDLLRKHLERIELQVARATLLRDRLRDMTTGSEIQVSVDELPATLDAMSKVQTRSQTSRCTCKLAIEREERWRRIRDELRDCMDRGEHPCGERAKAVAVAARLLISEIAGADSRVSTILKVLARLSAPRSLAGWDP</sequence>
<organism>
    <name type="scientific">Bradyrhizobium elkanii</name>
    <dbReference type="NCBI Taxonomy" id="29448"/>
    <lineage>
        <taxon>Bacteria</taxon>
        <taxon>Pseudomonadati</taxon>
        <taxon>Pseudomonadota</taxon>
        <taxon>Alphaproteobacteria</taxon>
        <taxon>Hyphomicrobiales</taxon>
        <taxon>Nitrobacteraceae</taxon>
        <taxon>Bradyrhizobium</taxon>
    </lineage>
</organism>